<sequence length="183" mass="20937">MSRGNELVFKAKKTSEKISENIHIFANDPSLAFFRVQEHVRKVTPAIFEKRDEVFQLQNNLQGHCYDMEYGIQALRTIEKSESIFENIQEMIKASIFLKQQLKYEESRKKVKKDSTKSSVYKRFSAHLALDLPDLPDFGGVMRETSQRMENMIGPGTATGRTEAQAATSSNPGELQRSYTTLH</sequence>
<reference key="1">
    <citation type="journal article" date="2000" name="Science">
        <title>The genome sequence of Drosophila melanogaster.</title>
        <authorList>
            <person name="Adams M.D."/>
            <person name="Celniker S.E."/>
            <person name="Holt R.A."/>
            <person name="Evans C.A."/>
            <person name="Gocayne J.D."/>
            <person name="Amanatides P.G."/>
            <person name="Scherer S.E."/>
            <person name="Li P.W."/>
            <person name="Hoskins R.A."/>
            <person name="Galle R.F."/>
            <person name="George R.A."/>
            <person name="Lewis S.E."/>
            <person name="Richards S."/>
            <person name="Ashburner M."/>
            <person name="Henderson S.N."/>
            <person name="Sutton G.G."/>
            <person name="Wortman J.R."/>
            <person name="Yandell M.D."/>
            <person name="Zhang Q."/>
            <person name="Chen L.X."/>
            <person name="Brandon R.C."/>
            <person name="Rogers Y.-H.C."/>
            <person name="Blazej R.G."/>
            <person name="Champe M."/>
            <person name="Pfeiffer B.D."/>
            <person name="Wan K.H."/>
            <person name="Doyle C."/>
            <person name="Baxter E.G."/>
            <person name="Helt G."/>
            <person name="Nelson C.R."/>
            <person name="Miklos G.L.G."/>
            <person name="Abril J.F."/>
            <person name="Agbayani A."/>
            <person name="An H.-J."/>
            <person name="Andrews-Pfannkoch C."/>
            <person name="Baldwin D."/>
            <person name="Ballew R.M."/>
            <person name="Basu A."/>
            <person name="Baxendale J."/>
            <person name="Bayraktaroglu L."/>
            <person name="Beasley E.M."/>
            <person name="Beeson K.Y."/>
            <person name="Benos P.V."/>
            <person name="Berman B.P."/>
            <person name="Bhandari D."/>
            <person name="Bolshakov S."/>
            <person name="Borkova D."/>
            <person name="Botchan M.R."/>
            <person name="Bouck J."/>
            <person name="Brokstein P."/>
            <person name="Brottier P."/>
            <person name="Burtis K.C."/>
            <person name="Busam D.A."/>
            <person name="Butler H."/>
            <person name="Cadieu E."/>
            <person name="Center A."/>
            <person name="Chandra I."/>
            <person name="Cherry J.M."/>
            <person name="Cawley S."/>
            <person name="Dahlke C."/>
            <person name="Davenport L.B."/>
            <person name="Davies P."/>
            <person name="de Pablos B."/>
            <person name="Delcher A."/>
            <person name="Deng Z."/>
            <person name="Mays A.D."/>
            <person name="Dew I."/>
            <person name="Dietz S.M."/>
            <person name="Dodson K."/>
            <person name="Doup L.E."/>
            <person name="Downes M."/>
            <person name="Dugan-Rocha S."/>
            <person name="Dunkov B.C."/>
            <person name="Dunn P."/>
            <person name="Durbin K.J."/>
            <person name="Evangelista C.C."/>
            <person name="Ferraz C."/>
            <person name="Ferriera S."/>
            <person name="Fleischmann W."/>
            <person name="Fosler C."/>
            <person name="Gabrielian A.E."/>
            <person name="Garg N.S."/>
            <person name="Gelbart W.M."/>
            <person name="Glasser K."/>
            <person name="Glodek A."/>
            <person name="Gong F."/>
            <person name="Gorrell J.H."/>
            <person name="Gu Z."/>
            <person name="Guan P."/>
            <person name="Harris M."/>
            <person name="Harris N.L."/>
            <person name="Harvey D.A."/>
            <person name="Heiman T.J."/>
            <person name="Hernandez J.R."/>
            <person name="Houck J."/>
            <person name="Hostin D."/>
            <person name="Houston K.A."/>
            <person name="Howland T.J."/>
            <person name="Wei M.-H."/>
            <person name="Ibegwam C."/>
            <person name="Jalali M."/>
            <person name="Kalush F."/>
            <person name="Karpen G.H."/>
            <person name="Ke Z."/>
            <person name="Kennison J.A."/>
            <person name="Ketchum K.A."/>
            <person name="Kimmel B.E."/>
            <person name="Kodira C.D."/>
            <person name="Kraft C.L."/>
            <person name="Kravitz S."/>
            <person name="Kulp D."/>
            <person name="Lai Z."/>
            <person name="Lasko P."/>
            <person name="Lei Y."/>
            <person name="Levitsky A.A."/>
            <person name="Li J.H."/>
            <person name="Li Z."/>
            <person name="Liang Y."/>
            <person name="Lin X."/>
            <person name="Liu X."/>
            <person name="Mattei B."/>
            <person name="McIntosh T.C."/>
            <person name="McLeod M.P."/>
            <person name="McPherson D."/>
            <person name="Merkulov G."/>
            <person name="Milshina N.V."/>
            <person name="Mobarry C."/>
            <person name="Morris J."/>
            <person name="Moshrefi A."/>
            <person name="Mount S.M."/>
            <person name="Moy M."/>
            <person name="Murphy B."/>
            <person name="Murphy L."/>
            <person name="Muzny D.M."/>
            <person name="Nelson D.L."/>
            <person name="Nelson D.R."/>
            <person name="Nelson K.A."/>
            <person name="Nixon K."/>
            <person name="Nusskern D.R."/>
            <person name="Pacleb J.M."/>
            <person name="Palazzolo M."/>
            <person name="Pittman G.S."/>
            <person name="Pan S."/>
            <person name="Pollard J."/>
            <person name="Puri V."/>
            <person name="Reese M.G."/>
            <person name="Reinert K."/>
            <person name="Remington K."/>
            <person name="Saunders R.D.C."/>
            <person name="Scheeler F."/>
            <person name="Shen H."/>
            <person name="Shue B.C."/>
            <person name="Siden-Kiamos I."/>
            <person name="Simpson M."/>
            <person name="Skupski M.P."/>
            <person name="Smith T.J."/>
            <person name="Spier E."/>
            <person name="Spradling A.C."/>
            <person name="Stapleton M."/>
            <person name="Strong R."/>
            <person name="Sun E."/>
            <person name="Svirskas R."/>
            <person name="Tector C."/>
            <person name="Turner R."/>
            <person name="Venter E."/>
            <person name="Wang A.H."/>
            <person name="Wang X."/>
            <person name="Wang Z.-Y."/>
            <person name="Wassarman D.A."/>
            <person name="Weinstock G.M."/>
            <person name="Weissenbach J."/>
            <person name="Williams S.M."/>
            <person name="Woodage T."/>
            <person name="Worley K.C."/>
            <person name="Wu D."/>
            <person name="Yang S."/>
            <person name="Yao Q.A."/>
            <person name="Ye J."/>
            <person name="Yeh R.-F."/>
            <person name="Zaveri J.S."/>
            <person name="Zhan M."/>
            <person name="Zhang G."/>
            <person name="Zhao Q."/>
            <person name="Zheng L."/>
            <person name="Zheng X.H."/>
            <person name="Zhong F.N."/>
            <person name="Zhong W."/>
            <person name="Zhou X."/>
            <person name="Zhu S.C."/>
            <person name="Zhu X."/>
            <person name="Smith H.O."/>
            <person name="Gibbs R.A."/>
            <person name="Myers E.W."/>
            <person name="Rubin G.M."/>
            <person name="Venter J.C."/>
        </authorList>
    </citation>
    <scope>NUCLEOTIDE SEQUENCE [LARGE SCALE GENOMIC DNA]</scope>
    <source>
        <strain>Berkeley</strain>
    </source>
</reference>
<reference key="2">
    <citation type="journal article" date="2002" name="Genome Biol.">
        <title>Annotation of the Drosophila melanogaster euchromatic genome: a systematic review.</title>
        <authorList>
            <person name="Misra S."/>
            <person name="Crosby M.A."/>
            <person name="Mungall C.J."/>
            <person name="Matthews B.B."/>
            <person name="Campbell K.S."/>
            <person name="Hradecky P."/>
            <person name="Huang Y."/>
            <person name="Kaminker J.S."/>
            <person name="Millburn G.H."/>
            <person name="Prochnik S.E."/>
            <person name="Smith C.D."/>
            <person name="Tupy J.L."/>
            <person name="Whitfield E.J."/>
            <person name="Bayraktaroglu L."/>
            <person name="Berman B.P."/>
            <person name="Bettencourt B.R."/>
            <person name="Celniker S.E."/>
            <person name="de Grey A.D.N.J."/>
            <person name="Drysdale R.A."/>
            <person name="Harris N.L."/>
            <person name="Richter J."/>
            <person name="Russo S."/>
            <person name="Schroeder A.J."/>
            <person name="Shu S.Q."/>
            <person name="Stapleton M."/>
            <person name="Yamada C."/>
            <person name="Ashburner M."/>
            <person name="Gelbart W.M."/>
            <person name="Rubin G.M."/>
            <person name="Lewis S.E."/>
        </authorList>
    </citation>
    <scope>GENOME REANNOTATION</scope>
    <source>
        <strain>Berkeley</strain>
    </source>
</reference>
<reference key="3">
    <citation type="submission" date="2006-06" db="EMBL/GenBank/DDBJ databases">
        <authorList>
            <person name="Stapleton M."/>
            <person name="Carlson J.W."/>
            <person name="Chavez C."/>
            <person name="Frise E."/>
            <person name="George R.A."/>
            <person name="Pacleb J.M."/>
            <person name="Park S."/>
            <person name="Wan K.H."/>
            <person name="Yu C."/>
            <person name="Celniker S.E."/>
        </authorList>
    </citation>
    <scope>NUCLEOTIDE SEQUENCE [LARGE SCALE MRNA]</scope>
</reference>
<feature type="chain" id="PRO_0000286447" description="BLOC-1-related complex subunit 8 homolog">
    <location>
        <begin position="1"/>
        <end position="183"/>
    </location>
</feature>
<feature type="region of interest" description="Disordered" evidence="2">
    <location>
        <begin position="152"/>
        <end position="183"/>
    </location>
</feature>
<feature type="compositionally biased region" description="Polar residues" evidence="2">
    <location>
        <begin position="159"/>
        <end position="183"/>
    </location>
</feature>
<organism>
    <name type="scientific">Drosophila melanogaster</name>
    <name type="common">Fruit fly</name>
    <dbReference type="NCBI Taxonomy" id="7227"/>
    <lineage>
        <taxon>Eukaryota</taxon>
        <taxon>Metazoa</taxon>
        <taxon>Ecdysozoa</taxon>
        <taxon>Arthropoda</taxon>
        <taxon>Hexapoda</taxon>
        <taxon>Insecta</taxon>
        <taxon>Pterygota</taxon>
        <taxon>Neoptera</taxon>
        <taxon>Endopterygota</taxon>
        <taxon>Diptera</taxon>
        <taxon>Brachycera</taxon>
        <taxon>Muscomorpha</taxon>
        <taxon>Ephydroidea</taxon>
        <taxon>Drosophilidae</taxon>
        <taxon>Drosophila</taxon>
        <taxon>Sophophora</taxon>
    </lineage>
</organism>
<proteinExistence type="evidence at transcript level"/>
<dbReference type="EMBL" id="AE014298">
    <property type="protein sequence ID" value="AAN09342.1"/>
    <property type="molecule type" value="Genomic_DNA"/>
</dbReference>
<dbReference type="EMBL" id="BT025828">
    <property type="protein sequence ID" value="ABF85728.1"/>
    <property type="molecule type" value="mRNA"/>
</dbReference>
<dbReference type="RefSeq" id="NP_727796.1">
    <property type="nucleotide sequence ID" value="NM_167414.3"/>
</dbReference>
<dbReference type="SMR" id="Q8IR45"/>
<dbReference type="BioGRID" id="76721">
    <property type="interactions" value="1"/>
</dbReference>
<dbReference type="ComplexPortal" id="CPX-2760">
    <property type="entry name" value="BORC complex"/>
</dbReference>
<dbReference type="FunCoup" id="Q8IR45">
    <property type="interactions" value="106"/>
</dbReference>
<dbReference type="IntAct" id="Q8IR45">
    <property type="interactions" value="3"/>
</dbReference>
<dbReference type="STRING" id="7227.FBpp0073805"/>
<dbReference type="GlyGen" id="Q8IR45">
    <property type="glycosylation" value="1 site"/>
</dbReference>
<dbReference type="PaxDb" id="7227-FBpp0073805"/>
<dbReference type="DNASU" id="318103"/>
<dbReference type="EnsemblMetazoa" id="FBtr0073988">
    <property type="protein sequence ID" value="FBpp0073805"/>
    <property type="gene ID" value="FBgn0052590"/>
</dbReference>
<dbReference type="GeneID" id="318103"/>
<dbReference type="KEGG" id="dme:Dmel_CG32590"/>
<dbReference type="UCSC" id="CG32590-RA">
    <property type="organism name" value="d. melanogaster"/>
</dbReference>
<dbReference type="AGR" id="FB:FBgn0052590"/>
<dbReference type="FlyBase" id="FBgn0052590">
    <property type="gene designation" value="CG32590"/>
</dbReference>
<dbReference type="VEuPathDB" id="VectorBase:FBgn0052590"/>
<dbReference type="eggNOG" id="KOG4523">
    <property type="taxonomic scope" value="Eukaryota"/>
</dbReference>
<dbReference type="GeneTree" id="ENSGT00390000014856"/>
<dbReference type="HOGENOM" id="CLU_1588402_0_0_1"/>
<dbReference type="InParanoid" id="Q8IR45"/>
<dbReference type="OMA" id="SMMNHAR"/>
<dbReference type="OrthoDB" id="10044187at2759"/>
<dbReference type="PhylomeDB" id="Q8IR45"/>
<dbReference type="BioGRID-ORCS" id="318103">
    <property type="hits" value="0 hits in 1 CRISPR screen"/>
</dbReference>
<dbReference type="GenomeRNAi" id="318103"/>
<dbReference type="PRO" id="PR:Q8IR45"/>
<dbReference type="Proteomes" id="UP000000803">
    <property type="component" value="Chromosome X"/>
</dbReference>
<dbReference type="Bgee" id="FBgn0052590">
    <property type="expression patterns" value="Expressed in T neuron T4c (Drosophila) in embryonic/larval optic lobe (Drosophila) and 70 other cell types or tissues"/>
</dbReference>
<dbReference type="GO" id="GO:0099078">
    <property type="term" value="C:BORC complex"/>
    <property type="evidence" value="ECO:0000318"/>
    <property type="project" value="GO_Central"/>
</dbReference>
<dbReference type="GO" id="GO:0005765">
    <property type="term" value="C:lysosomal membrane"/>
    <property type="evidence" value="ECO:0007669"/>
    <property type="project" value="UniProtKB-SubCell"/>
</dbReference>
<dbReference type="InterPro" id="IPR019320">
    <property type="entry name" value="BORCS8"/>
</dbReference>
<dbReference type="PANTHER" id="PTHR21146:SF0">
    <property type="entry name" value="BLOC-1-RELATED COMPLEX SUBUNIT 8"/>
    <property type="match status" value="1"/>
</dbReference>
<dbReference type="PANTHER" id="PTHR21146">
    <property type="entry name" value="MEF2B PROTEIN"/>
    <property type="match status" value="1"/>
</dbReference>
<dbReference type="Pfam" id="PF10167">
    <property type="entry name" value="BORCS8"/>
    <property type="match status" value="1"/>
</dbReference>
<accession>Q8IR45</accession>
<comment type="function">
    <text evidence="1">May participate in the coupling of lysosomes to microtubule plus-end-directed kinesin motor.</text>
</comment>
<comment type="subcellular location">
    <subcellularLocation>
        <location evidence="1">Lysosome membrane</location>
    </subcellularLocation>
</comment>
<comment type="similarity">
    <text evidence="3">Belongs to the BORCS8 family.</text>
</comment>
<protein>
    <recommendedName>
        <fullName evidence="3">BLOC-1-related complex subunit 8 homolog</fullName>
    </recommendedName>
</protein>
<name>BORC8_DROME</name>
<evidence type="ECO:0000250" key="1">
    <source>
        <dbReference type="UniProtKB" id="Q96FH0"/>
    </source>
</evidence>
<evidence type="ECO:0000256" key="2">
    <source>
        <dbReference type="SAM" id="MobiDB-lite"/>
    </source>
</evidence>
<evidence type="ECO:0000305" key="3"/>
<evidence type="ECO:0000312" key="4">
    <source>
        <dbReference type="FlyBase" id="FBgn0052590"/>
    </source>
</evidence>
<keyword id="KW-0458">Lysosome</keyword>
<keyword id="KW-0472">Membrane</keyword>
<keyword id="KW-1185">Reference proteome</keyword>
<gene>
    <name evidence="4" type="ORF">CG32590</name>
</gene>